<reference key="1">
    <citation type="journal article" date="2000" name="Nature">
        <title>Sequence and analysis of chromosome 1 of the plant Arabidopsis thaliana.</title>
        <authorList>
            <person name="Theologis A."/>
            <person name="Ecker J.R."/>
            <person name="Palm C.J."/>
            <person name="Federspiel N.A."/>
            <person name="Kaul S."/>
            <person name="White O."/>
            <person name="Alonso J."/>
            <person name="Altafi H."/>
            <person name="Araujo R."/>
            <person name="Bowman C.L."/>
            <person name="Brooks S.Y."/>
            <person name="Buehler E."/>
            <person name="Chan A."/>
            <person name="Chao Q."/>
            <person name="Chen H."/>
            <person name="Cheuk R.F."/>
            <person name="Chin C.W."/>
            <person name="Chung M.K."/>
            <person name="Conn L."/>
            <person name="Conway A.B."/>
            <person name="Conway A.R."/>
            <person name="Creasy T.H."/>
            <person name="Dewar K."/>
            <person name="Dunn P."/>
            <person name="Etgu P."/>
            <person name="Feldblyum T.V."/>
            <person name="Feng J.-D."/>
            <person name="Fong B."/>
            <person name="Fujii C.Y."/>
            <person name="Gill J.E."/>
            <person name="Goldsmith A.D."/>
            <person name="Haas B."/>
            <person name="Hansen N.F."/>
            <person name="Hughes B."/>
            <person name="Huizar L."/>
            <person name="Hunter J.L."/>
            <person name="Jenkins J."/>
            <person name="Johnson-Hopson C."/>
            <person name="Khan S."/>
            <person name="Khaykin E."/>
            <person name="Kim C.J."/>
            <person name="Koo H.L."/>
            <person name="Kremenetskaia I."/>
            <person name="Kurtz D.B."/>
            <person name="Kwan A."/>
            <person name="Lam B."/>
            <person name="Langin-Hooper S."/>
            <person name="Lee A."/>
            <person name="Lee J.M."/>
            <person name="Lenz C.A."/>
            <person name="Li J.H."/>
            <person name="Li Y.-P."/>
            <person name="Lin X."/>
            <person name="Liu S.X."/>
            <person name="Liu Z.A."/>
            <person name="Luros J.S."/>
            <person name="Maiti R."/>
            <person name="Marziali A."/>
            <person name="Militscher J."/>
            <person name="Miranda M."/>
            <person name="Nguyen M."/>
            <person name="Nierman W.C."/>
            <person name="Osborne B.I."/>
            <person name="Pai G."/>
            <person name="Peterson J."/>
            <person name="Pham P.K."/>
            <person name="Rizzo M."/>
            <person name="Rooney T."/>
            <person name="Rowley D."/>
            <person name="Sakano H."/>
            <person name="Salzberg S.L."/>
            <person name="Schwartz J.R."/>
            <person name="Shinn P."/>
            <person name="Southwick A.M."/>
            <person name="Sun H."/>
            <person name="Tallon L.J."/>
            <person name="Tambunga G."/>
            <person name="Toriumi M.J."/>
            <person name="Town C.D."/>
            <person name="Utterback T."/>
            <person name="Van Aken S."/>
            <person name="Vaysberg M."/>
            <person name="Vysotskaia V.S."/>
            <person name="Walker M."/>
            <person name="Wu D."/>
            <person name="Yu G."/>
            <person name="Fraser C.M."/>
            <person name="Venter J.C."/>
            <person name="Davis R.W."/>
        </authorList>
    </citation>
    <scope>NUCLEOTIDE SEQUENCE [LARGE SCALE GENOMIC DNA]</scope>
    <source>
        <strain>cv. Columbia</strain>
    </source>
</reference>
<reference key="2">
    <citation type="journal article" date="2017" name="Plant J.">
        <title>Araport11: a complete reannotation of the Arabidopsis thaliana reference genome.</title>
        <authorList>
            <person name="Cheng C.Y."/>
            <person name="Krishnakumar V."/>
            <person name="Chan A.P."/>
            <person name="Thibaud-Nissen F."/>
            <person name="Schobel S."/>
            <person name="Town C.D."/>
        </authorList>
    </citation>
    <scope>GENOME REANNOTATION</scope>
    <source>
        <strain>cv. Columbia</strain>
    </source>
</reference>
<reference key="3">
    <citation type="journal article" date="2006" name="Plant Biotechnol. J.">
        <title>Simultaneous high-throughput recombinational cloning of open reading frames in closed and open configurations.</title>
        <authorList>
            <person name="Underwood B.A."/>
            <person name="Vanderhaeghen R."/>
            <person name="Whitford R."/>
            <person name="Town C.D."/>
            <person name="Hilson P."/>
        </authorList>
    </citation>
    <scope>NUCLEOTIDE SEQUENCE [LARGE SCALE MRNA] (ISOFORM 2)</scope>
    <source>
        <strain>cv. Columbia</strain>
    </source>
</reference>
<keyword id="KW-0025">Alternative splicing</keyword>
<keyword id="KW-1185">Reference proteome</keyword>
<name>FB74_ARATH</name>
<accession>Q1PFG1</accession>
<accession>F4IEV3</accession>
<accession>Q9C709</accession>
<comment type="alternative products">
    <event type="alternative splicing"/>
    <isoform>
        <id>Q1PFG1-1</id>
        <name>1</name>
        <sequence type="displayed"/>
    </isoform>
    <isoform>
        <id>Q1PFG1-2</id>
        <name>2</name>
        <sequence type="described" ref="VSP_036626 VSP_036627"/>
    </isoform>
</comment>
<comment type="miscellaneous">
    <molecule>Isoform 2</molecule>
    <text evidence="3">May be due to intron retention.</text>
</comment>
<comment type="sequence caution" evidence="3">
    <conflict type="erroneous gene model prediction">
        <sequence resource="EMBL-CDS" id="AAG51152"/>
    </conflict>
</comment>
<comment type="sequence caution" evidence="3">
    <conflict type="erroneous gene model prediction">
        <sequence resource="EMBL-CDS" id="AEE34515"/>
    </conflict>
</comment>
<gene>
    <name type="ordered locus">At1g66490</name>
    <name type="ORF">F28G11.7</name>
</gene>
<organism>
    <name type="scientific">Arabidopsis thaliana</name>
    <name type="common">Mouse-ear cress</name>
    <dbReference type="NCBI Taxonomy" id="3702"/>
    <lineage>
        <taxon>Eukaryota</taxon>
        <taxon>Viridiplantae</taxon>
        <taxon>Streptophyta</taxon>
        <taxon>Embryophyta</taxon>
        <taxon>Tracheophyta</taxon>
        <taxon>Spermatophyta</taxon>
        <taxon>Magnoliopsida</taxon>
        <taxon>eudicotyledons</taxon>
        <taxon>Gunneridae</taxon>
        <taxon>Pentapetalae</taxon>
        <taxon>rosids</taxon>
        <taxon>malvids</taxon>
        <taxon>Brassicales</taxon>
        <taxon>Brassicaceae</taxon>
        <taxon>Camelineae</taxon>
        <taxon>Arabidopsis</taxon>
    </lineage>
</organism>
<sequence length="370" mass="43092">MRTISDLPVALVEEILSRVPLTSLSAVRSTCKTWNALSKTQIFGKTRQQFLGFMMIDFGLYSIKFDLQGLNYESDFVEPSIKRVSILDQLDIFKVFHCEGLLLCVFRGNRWPVVWNPYLGGTGWIQPISDFHKYQVSDKFAFGYENKNRNYKILRFLRYFFGFYDIYDLNSSAWKVLDVNPDCDIKCGVSLKGKTYFFAKEIAKAPNVKDFLVCFDFTAERFGPRLPLPFHSCGLFSEHVTLSCVRDEHLAVLYRRYNGVMEIYITTKIEPNEVFWSNFLKVDLTTFPDRFYGSRSHYFFIDEEKKVAVVFKNEPEWTMDCSYQTAYIIGKGGYLKSVKFGETPNDRKHNNAWNINSFMLSSYVPSLVQL</sequence>
<protein>
    <recommendedName>
        <fullName>F-box protein At1g66490</fullName>
    </recommendedName>
</protein>
<feature type="chain" id="PRO_0000283347" description="F-box protein At1g66490">
    <location>
        <begin position="1"/>
        <end position="370"/>
    </location>
</feature>
<feature type="domain" description="F-box" evidence="1">
    <location>
        <begin position="1"/>
        <end position="46"/>
    </location>
</feature>
<feature type="splice variant" id="VSP_036626" description="In isoform 2." evidence="2">
    <original>YF</original>
    <variation>CF</variation>
    <location>
        <begin position="159"/>
        <end position="160"/>
    </location>
</feature>
<feature type="splice variant" id="VSP_036627" description="In isoform 2." evidence="2">
    <location>
        <begin position="161"/>
        <end position="370"/>
    </location>
</feature>
<evidence type="ECO:0000255" key="1">
    <source>
        <dbReference type="PROSITE-ProRule" id="PRU00080"/>
    </source>
</evidence>
<evidence type="ECO:0000303" key="2">
    <source>
    </source>
</evidence>
<evidence type="ECO:0000305" key="3"/>
<dbReference type="EMBL" id="AC074025">
    <property type="protein sequence ID" value="AAG51152.1"/>
    <property type="status" value="ALT_SEQ"/>
    <property type="molecule type" value="Genomic_DNA"/>
</dbReference>
<dbReference type="EMBL" id="CP002684">
    <property type="protein sequence ID" value="AEE34515.1"/>
    <property type="status" value="ALT_SEQ"/>
    <property type="molecule type" value="Genomic_DNA"/>
</dbReference>
<dbReference type="EMBL" id="DQ446402">
    <property type="protein sequence ID" value="ABE65746.1"/>
    <property type="molecule type" value="mRNA"/>
</dbReference>
<dbReference type="PIR" id="E96690">
    <property type="entry name" value="E96690"/>
</dbReference>
<dbReference type="RefSeq" id="NP_176822.1">
    <property type="nucleotide sequence ID" value="NM_105320.1"/>
</dbReference>
<dbReference type="FunCoup" id="Q1PFG1">
    <property type="interactions" value="1"/>
</dbReference>
<dbReference type="PaxDb" id="3702-AT1G66490.1"/>
<dbReference type="GeneID" id="842967"/>
<dbReference type="KEGG" id="ath:AT1G66490"/>
<dbReference type="Araport" id="AT1G66490"/>
<dbReference type="TAIR" id="AT1G66490"/>
<dbReference type="HOGENOM" id="CLU_034692_0_0_1"/>
<dbReference type="InParanoid" id="Q1PFG1"/>
<dbReference type="PhylomeDB" id="Q1PFG1"/>
<dbReference type="PRO" id="PR:Q1PFG1"/>
<dbReference type="Proteomes" id="UP000006548">
    <property type="component" value="Chromosome 1"/>
</dbReference>
<dbReference type="ExpressionAtlas" id="Q1PFG1">
    <property type="expression patterns" value="baseline and differential"/>
</dbReference>
<dbReference type="CDD" id="cd22157">
    <property type="entry name" value="F-box_AtFBW1-like"/>
    <property type="match status" value="1"/>
</dbReference>
<dbReference type="Gene3D" id="1.20.1280.50">
    <property type="match status" value="1"/>
</dbReference>
<dbReference type="InterPro" id="IPR050233">
    <property type="entry name" value="A_thaliana_F-box"/>
</dbReference>
<dbReference type="InterPro" id="IPR006527">
    <property type="entry name" value="F-box-assoc_dom_typ1"/>
</dbReference>
<dbReference type="InterPro" id="IPR017451">
    <property type="entry name" value="F-box-assoc_interact_dom"/>
</dbReference>
<dbReference type="InterPro" id="IPR036047">
    <property type="entry name" value="F-box-like_dom_sf"/>
</dbReference>
<dbReference type="InterPro" id="IPR001810">
    <property type="entry name" value="F-box_dom"/>
</dbReference>
<dbReference type="NCBIfam" id="TIGR01640">
    <property type="entry name" value="F_box_assoc_1"/>
    <property type="match status" value="1"/>
</dbReference>
<dbReference type="PANTHER" id="PTHR47993:SF393">
    <property type="entry name" value="F-BOX DOMAIN-CONTAINING PROTEIN"/>
    <property type="match status" value="1"/>
</dbReference>
<dbReference type="PANTHER" id="PTHR47993">
    <property type="entry name" value="OS09G0372900 PROTEIN-RELATED"/>
    <property type="match status" value="1"/>
</dbReference>
<dbReference type="Pfam" id="PF00646">
    <property type="entry name" value="F-box"/>
    <property type="match status" value="1"/>
</dbReference>
<dbReference type="Pfam" id="PF07734">
    <property type="entry name" value="FBA_1"/>
    <property type="match status" value="1"/>
</dbReference>
<dbReference type="SMART" id="SM00256">
    <property type="entry name" value="FBOX"/>
    <property type="match status" value="1"/>
</dbReference>
<dbReference type="SUPFAM" id="SSF81383">
    <property type="entry name" value="F-box domain"/>
    <property type="match status" value="1"/>
</dbReference>
<dbReference type="PROSITE" id="PS50181">
    <property type="entry name" value="FBOX"/>
    <property type="match status" value="1"/>
</dbReference>
<proteinExistence type="evidence at transcript level"/>